<comment type="subunit">
    <text evidence="2 3">Exhibits a pH-dependent oligomerization state: at pH 7, the dominant species is a dimer, where each monomer is a two-CBS domain protein, and at pH 4.5-4.8, the dominant species is a tetramer, with an oblong shape (PubMed:18607087, PubMed:19267448). At pH 2.5, there is formation of intermolecular hydrogen bonds, suggesting the presence of high-molecular weight species (PubMed:19267448). The physiological dimeric species is thermal and chemically very stable (PubMed:19267448).</text>
</comment>
<comment type="domain">
    <text evidence="4 5">The CBS domains bind adenosine derivatives (AMP, ATP, NADP and SAM) (PubMed:20959390). The CBS domains can also bind calf-thymus DNA and E-boxes recognized by transcription factors (PubMed:20934423). Binding of the nucleotides induces protein conformational changes (PubMed:20934423, PubMed:20959390).</text>
</comment>
<feature type="chain" id="PRO_0000107005" description="CBS domain-containing protein MJ0729">
    <location>
        <begin position="1"/>
        <end position="124"/>
    </location>
</feature>
<feature type="domain" description="CBS 1" evidence="1">
    <location>
        <begin position="10"/>
        <end position="67"/>
    </location>
</feature>
<feature type="domain" description="CBS 2" evidence="1">
    <location>
        <begin position="70"/>
        <end position="124"/>
    </location>
</feature>
<gene>
    <name type="ordered locus">MJ0729</name>
</gene>
<name>Y729_METJA</name>
<proteinExistence type="evidence at protein level"/>
<organism>
    <name type="scientific">Methanocaldococcus jannaschii (strain ATCC 43067 / DSM 2661 / JAL-1 / JCM 10045 / NBRC 100440)</name>
    <name type="common">Methanococcus jannaschii</name>
    <dbReference type="NCBI Taxonomy" id="243232"/>
    <lineage>
        <taxon>Archaea</taxon>
        <taxon>Methanobacteriati</taxon>
        <taxon>Methanobacteriota</taxon>
        <taxon>Methanomada group</taxon>
        <taxon>Methanococci</taxon>
        <taxon>Methanococcales</taxon>
        <taxon>Methanocaldococcaceae</taxon>
        <taxon>Methanocaldococcus</taxon>
    </lineage>
</organism>
<keyword id="KW-0129">CBS domain</keyword>
<keyword id="KW-0238">DNA-binding</keyword>
<keyword id="KW-1185">Reference proteome</keyword>
<keyword id="KW-0677">Repeat</keyword>
<evidence type="ECO:0000255" key="1">
    <source>
        <dbReference type="PROSITE-ProRule" id="PRU00703"/>
    </source>
</evidence>
<evidence type="ECO:0000269" key="2">
    <source>
    </source>
</evidence>
<evidence type="ECO:0000269" key="3">
    <source>
    </source>
</evidence>
<evidence type="ECO:0000269" key="4">
    <source>
    </source>
</evidence>
<evidence type="ECO:0000269" key="5">
    <source>
    </source>
</evidence>
<evidence type="ECO:0000305" key="6"/>
<reference key="1">
    <citation type="journal article" date="1996" name="Science">
        <title>Complete genome sequence of the methanogenic archaeon, Methanococcus jannaschii.</title>
        <authorList>
            <person name="Bult C.J."/>
            <person name="White O."/>
            <person name="Olsen G.J."/>
            <person name="Zhou L."/>
            <person name="Fleischmann R.D."/>
            <person name="Sutton G.G."/>
            <person name="Blake J.A."/>
            <person name="FitzGerald L.M."/>
            <person name="Clayton R.A."/>
            <person name="Gocayne J.D."/>
            <person name="Kerlavage A.R."/>
            <person name="Dougherty B.A."/>
            <person name="Tomb J.-F."/>
            <person name="Adams M.D."/>
            <person name="Reich C.I."/>
            <person name="Overbeek R."/>
            <person name="Kirkness E.F."/>
            <person name="Weinstock K.G."/>
            <person name="Merrick J.M."/>
            <person name="Glodek A."/>
            <person name="Scott J.L."/>
            <person name="Geoghagen N.S.M."/>
            <person name="Weidman J.F."/>
            <person name="Fuhrmann J.L."/>
            <person name="Nguyen D."/>
            <person name="Utterback T.R."/>
            <person name="Kelley J.M."/>
            <person name="Peterson J.D."/>
            <person name="Sadow P.W."/>
            <person name="Hanna M.C."/>
            <person name="Cotton M.D."/>
            <person name="Roberts K.M."/>
            <person name="Hurst M.A."/>
            <person name="Kaine B.P."/>
            <person name="Borodovsky M."/>
            <person name="Klenk H.-P."/>
            <person name="Fraser C.M."/>
            <person name="Smith H.O."/>
            <person name="Woese C.R."/>
            <person name="Venter J.C."/>
        </authorList>
    </citation>
    <scope>NUCLEOTIDE SEQUENCE [LARGE SCALE GENOMIC DNA]</scope>
    <source>
        <strain>ATCC 43067 / DSM 2661 / JAL-1 / JCM 10045 / NBRC 100440</strain>
    </source>
</reference>
<reference key="2">
    <citation type="journal article" date="2008" name="Acta Crystallogr. F">
        <title>Crystallization and preliminary crystallographic analysis of merohedrally twinned crystals of MJ0729, a CBS-domain protein from Methanococcus jannaschii.</title>
        <authorList>
            <person name="Fernandez-Millan P."/>
            <person name="Kortazar D."/>
            <person name="Lucas M."/>
            <person name="Martinez-Chantar M.L."/>
            <person name="Astigarraga E."/>
            <person name="Fernandez J.A."/>
            <person name="Sabas O."/>
            <person name="Albert A."/>
            <person name="Mato J.M."/>
            <person name="Martinez-Cruz L.A."/>
        </authorList>
    </citation>
    <scope>CRYSTALLIZATION</scope>
    <scope>SUBUNIT</scope>
</reference>
<reference key="3">
    <citation type="journal article" date="2009" name="Biochemistry">
        <title>The CBS domain protein MJ0729 of Methanocaldococcus jannaschii is a thermostable protein with a pH-dependent self-oligomerization.</title>
        <authorList>
            <person name="Martinez-Cruz L.A."/>
            <person name="Encinar J.A."/>
            <person name="Kortazar D."/>
            <person name="Prieto J."/>
            <person name="Gomez J."/>
            <person name="Fernandez-Millan P."/>
            <person name="Lucas M."/>
            <person name="Arribas E.A."/>
            <person name="Fernandez J.A."/>
            <person name="Martinez-Chantar M.L."/>
            <person name="Mato J.M."/>
            <person name="Neira J.L."/>
        </authorList>
    </citation>
    <scope>SUBUNIT</scope>
</reference>
<reference key="4">
    <citation type="journal article" date="2010" name="FEBS Lett.">
        <title>The CBS domain protein MJ0729 of Methanocaldococcus jannaschii binds DNA.</title>
        <authorList>
            <person name="Aguado-Llera D."/>
            <person name="Oyenarte I."/>
            <person name="Martinez-Cruz L.A."/>
            <person name="Neira J.L."/>
        </authorList>
    </citation>
    <scope>DNA-BINDING</scope>
    <scope>DOMAIN</scope>
</reference>
<reference key="5">
    <citation type="journal article" date="2011" name="Protein Eng. Des. Sel.">
        <title>Nucleotide-induced conformational transitions in the CBS domain protein MJ0729 of Methanocaldococcus jannaschii.</title>
        <authorList>
            <person name="Martinez-Cruz L.A."/>
            <person name="Encinar J.A."/>
            <person name="Sevilla P."/>
            <person name="Oyenarte I."/>
            <person name="Gomez-Garcia I."/>
            <person name="Aguado-Llera D."/>
            <person name="Garcia-Blanco F."/>
            <person name="Gomez J."/>
            <person name="Neira J.L."/>
        </authorList>
    </citation>
    <scope>DOMAIN</scope>
</reference>
<accession>Q58139</accession>
<protein>
    <recommendedName>
        <fullName evidence="6">CBS domain-containing protein MJ0729</fullName>
    </recommendedName>
</protein>
<dbReference type="EMBL" id="L77117">
    <property type="protein sequence ID" value="AAB98725.1"/>
    <property type="molecule type" value="Genomic_DNA"/>
</dbReference>
<dbReference type="PIR" id="A64391">
    <property type="entry name" value="A64391"/>
</dbReference>
<dbReference type="SMR" id="Q58139"/>
<dbReference type="STRING" id="243232.MJ_0729"/>
<dbReference type="PaxDb" id="243232-MJ_0729"/>
<dbReference type="EnsemblBacteria" id="AAB98725">
    <property type="protein sequence ID" value="AAB98725"/>
    <property type="gene ID" value="MJ_0729"/>
</dbReference>
<dbReference type="KEGG" id="mja:MJ_0729"/>
<dbReference type="eggNOG" id="arCOG00629">
    <property type="taxonomic scope" value="Archaea"/>
</dbReference>
<dbReference type="HOGENOM" id="CLU_2044437_0_0_2"/>
<dbReference type="InParanoid" id="Q58139"/>
<dbReference type="PhylomeDB" id="Q58139"/>
<dbReference type="Proteomes" id="UP000000805">
    <property type="component" value="Chromosome"/>
</dbReference>
<dbReference type="GO" id="GO:0003677">
    <property type="term" value="F:DNA binding"/>
    <property type="evidence" value="ECO:0007669"/>
    <property type="project" value="UniProtKB-KW"/>
</dbReference>
<dbReference type="CDD" id="cd02205">
    <property type="entry name" value="CBS_pair_SF"/>
    <property type="match status" value="1"/>
</dbReference>
<dbReference type="Gene3D" id="3.10.580.10">
    <property type="entry name" value="CBS-domain"/>
    <property type="match status" value="2"/>
</dbReference>
<dbReference type="InterPro" id="IPR000644">
    <property type="entry name" value="CBS_dom"/>
</dbReference>
<dbReference type="InterPro" id="IPR046342">
    <property type="entry name" value="CBS_dom_sf"/>
</dbReference>
<dbReference type="Pfam" id="PF00571">
    <property type="entry name" value="CBS"/>
    <property type="match status" value="2"/>
</dbReference>
<dbReference type="SMART" id="SM00116">
    <property type="entry name" value="CBS"/>
    <property type="match status" value="2"/>
</dbReference>
<dbReference type="SUPFAM" id="SSF54631">
    <property type="entry name" value="CBS-domain pair"/>
    <property type="match status" value="1"/>
</dbReference>
<dbReference type="PROSITE" id="PS51371">
    <property type="entry name" value="CBS"/>
    <property type="match status" value="2"/>
</dbReference>
<sequence>MMIMKVKEVMNKDFIKISPNDIGGEVVQTLYKEKKNYAPVIEDGKLVGWITALDLLIGCKHSKIEDLMLLIDEIKILKENDEVTDELIDEIIKNEDIAYPVINDRDEVVGTLSVFDLLKYYKNR</sequence>